<proteinExistence type="evidence at protein level"/>
<accession>P41677</accession>
<gene>
    <name type="primary">LEF-7</name>
</gene>
<feature type="chain" id="PRO_0000132829" description="Late expression factor 7">
    <location>
        <begin position="1"/>
        <end position="226"/>
    </location>
</feature>
<feature type="domain" description="F-box" evidence="1">
    <location>
        <begin position="9"/>
        <end position="58"/>
    </location>
</feature>
<protein>
    <recommendedName>
        <fullName>Late expression factor 7</fullName>
    </recommendedName>
</protein>
<dbReference type="EMBL" id="U01142">
    <property type="protein sequence ID" value="AAA19443.1"/>
    <property type="molecule type" value="Unassigned_DNA"/>
</dbReference>
<dbReference type="EMBL" id="L22858">
    <property type="protein sequence ID" value="AAA66755.1"/>
    <property type="molecule type" value="Genomic_DNA"/>
</dbReference>
<dbReference type="PIR" id="F72865">
    <property type="entry name" value="F72865"/>
</dbReference>
<dbReference type="KEGG" id="vg:1403958"/>
<dbReference type="OrthoDB" id="13193at10239"/>
<dbReference type="UniPathway" id="UPA00144"/>
<dbReference type="Proteomes" id="UP000008292">
    <property type="component" value="Segment"/>
</dbReference>
<dbReference type="GO" id="GO:0042025">
    <property type="term" value="C:host cell nucleus"/>
    <property type="evidence" value="ECO:0007669"/>
    <property type="project" value="UniProtKB-SubCell"/>
</dbReference>
<dbReference type="GO" id="GO:0043161">
    <property type="term" value="P:proteasome-mediated ubiquitin-dependent protein catabolic process"/>
    <property type="evidence" value="ECO:0007669"/>
    <property type="project" value="UniProtKB-UniPathway"/>
</dbReference>
<evidence type="ECO:0000255" key="1">
    <source>
        <dbReference type="PROSITE-ProRule" id="PRU00080"/>
    </source>
</evidence>
<evidence type="ECO:0000269" key="2">
    <source>
    </source>
</evidence>
<reference key="1">
    <citation type="journal article" date="1994" name="Virology">
        <title>Identification of lef-7: a baculovirus gene affecting late gene expression.</title>
        <authorList>
            <person name="Morris T.D."/>
            <person name="Todd J.W."/>
            <person name="Fisher B."/>
            <person name="Miller L.K."/>
        </authorList>
    </citation>
    <scope>NUCLEOTIDE SEQUENCE</scope>
    <source>
        <strain>L1</strain>
    </source>
</reference>
<reference key="2">
    <citation type="journal article" date="1994" name="Virology">
        <title>The complete DNA sequence of Autographa californica nuclear polyhedrosis virus.</title>
        <authorList>
            <person name="Ayres M.D."/>
            <person name="Howard S.C."/>
            <person name="Kuzio J."/>
            <person name="Lopez-Ferber M."/>
            <person name="Possee R.D."/>
        </authorList>
    </citation>
    <scope>NUCLEOTIDE SEQUENCE [LARGE SCALE GENOMIC DNA]</scope>
    <source>
        <strain>C6</strain>
    </source>
</reference>
<reference key="3">
    <citation type="journal article" date="2013" name="J. Virol.">
        <title>Baculovirus F-box protein LEF-7 modifies the host DNA damage response to enhance virus multiplication.</title>
        <authorList>
            <person name="Mitchell J.K."/>
            <person name="Byers N.M."/>
            <person name="Friesen P.D."/>
        </authorList>
    </citation>
    <scope>FUNCTION</scope>
    <scope>INTERACTION WITH HOST SKP1</scope>
    <scope>SUBCELLULAR LOCATION</scope>
</reference>
<sequence>MSSVTKRPRAKRIRLPLEIIDTILQYLDPILHAKVVGLTTRVKCRLLRDNNVEDYLKLTPASYHPTTDQFICNYLGITNQPMAPYLVPLLSFGKASCVFFNKCIPEDVRIVTLNWPLPLLENFLSKQFLWYKLARKLIEHERRMDRCVTPSTVQINLYDDNEDYLNCFNCFNCCKDNLVSFNCCIVDCNINDMNRCPDLQIDVYLDDNIISLYLYFLFRIYRIVKE</sequence>
<keyword id="KW-1048">Host nucleus</keyword>
<keyword id="KW-1185">Reference proteome</keyword>
<keyword id="KW-0804">Transcription</keyword>
<keyword id="KW-0805">Transcription regulation</keyword>
<keyword id="KW-0833">Ubl conjugation pathway</keyword>
<name>LEF7_NPVAC</name>
<organismHost>
    <name type="scientific">Lepidoptera</name>
    <name type="common">butterflies and moths</name>
    <dbReference type="NCBI Taxonomy" id="7088"/>
</organismHost>
<organism>
    <name type="scientific">Autographa californica nuclear polyhedrosis virus</name>
    <name type="common">AcMNPV</name>
    <dbReference type="NCBI Taxonomy" id="46015"/>
    <lineage>
        <taxon>Viruses</taxon>
        <taxon>Viruses incertae sedis</taxon>
        <taxon>Naldaviricetes</taxon>
        <taxon>Lefavirales</taxon>
        <taxon>Baculoviridae</taxon>
        <taxon>Alphabaculovirus</taxon>
        <taxon>Alphabaculovirus aucalifornicae</taxon>
    </lineage>
</organism>
<comment type="function">
    <text evidence="2">F-box protein that manipulates the host DNA damage response (DRR) in order to promote viral multiplication. Acts as a substrate recognition component of SKP1/Cullin/F-box (SCF) complexes for targeted protein polyubiquitination.</text>
</comment>
<comment type="pathway">
    <text evidence="2">Protein degradation; proteasomal ubiquitin-dependent pathway.</text>
</comment>
<comment type="subunit">
    <text evidence="2">Interacts with host S-phase kinase-associated protein 1/SKP1.</text>
</comment>
<comment type="subcellular location">
    <subcellularLocation>
        <location evidence="2">Host nucleus</location>
    </subcellularLocation>
</comment>